<protein>
    <recommendedName>
        <fullName evidence="1">Small ribosomal subunit protein uS17</fullName>
    </recommendedName>
    <alternativeName>
        <fullName evidence="2">30S ribosomal protein S17</fullName>
    </alternativeName>
</protein>
<accession>Q18GF8</accession>
<dbReference type="EMBL" id="AM180088">
    <property type="protein sequence ID" value="CAJ52940.1"/>
    <property type="molecule type" value="Genomic_DNA"/>
</dbReference>
<dbReference type="RefSeq" id="WP_011572053.1">
    <property type="nucleotide sequence ID" value="NC_008212.1"/>
</dbReference>
<dbReference type="SMR" id="Q18GF8"/>
<dbReference type="STRING" id="362976.HQ_2833A"/>
<dbReference type="GeneID" id="4194652"/>
<dbReference type="KEGG" id="hwa:HQ_2833A"/>
<dbReference type="eggNOG" id="arCOG04096">
    <property type="taxonomic scope" value="Archaea"/>
</dbReference>
<dbReference type="HOGENOM" id="CLU_073626_0_3_2"/>
<dbReference type="Proteomes" id="UP000001975">
    <property type="component" value="Chromosome"/>
</dbReference>
<dbReference type="GO" id="GO:0022627">
    <property type="term" value="C:cytosolic small ribosomal subunit"/>
    <property type="evidence" value="ECO:0007669"/>
    <property type="project" value="TreeGrafter"/>
</dbReference>
<dbReference type="GO" id="GO:0019843">
    <property type="term" value="F:rRNA binding"/>
    <property type="evidence" value="ECO:0007669"/>
    <property type="project" value="UniProtKB-UniRule"/>
</dbReference>
<dbReference type="GO" id="GO:0003735">
    <property type="term" value="F:structural constituent of ribosome"/>
    <property type="evidence" value="ECO:0007669"/>
    <property type="project" value="InterPro"/>
</dbReference>
<dbReference type="GO" id="GO:0006412">
    <property type="term" value="P:translation"/>
    <property type="evidence" value="ECO:0007669"/>
    <property type="project" value="UniProtKB-UniRule"/>
</dbReference>
<dbReference type="CDD" id="cd00364">
    <property type="entry name" value="Ribosomal_uS17"/>
    <property type="match status" value="1"/>
</dbReference>
<dbReference type="FunFam" id="2.40.50.1000:FF:000005">
    <property type="entry name" value="30S ribosomal protein S17"/>
    <property type="match status" value="1"/>
</dbReference>
<dbReference type="Gene3D" id="2.40.50.1000">
    <property type="match status" value="1"/>
</dbReference>
<dbReference type="HAMAP" id="MF_01345_A">
    <property type="entry name" value="Ribosomal_uS17_A"/>
    <property type="match status" value="1"/>
</dbReference>
<dbReference type="InterPro" id="IPR012340">
    <property type="entry name" value="NA-bd_OB-fold"/>
</dbReference>
<dbReference type="InterPro" id="IPR000266">
    <property type="entry name" value="Ribosomal_uS17"/>
</dbReference>
<dbReference type="InterPro" id="IPR028333">
    <property type="entry name" value="Ribosomal_uS17_arc/euk"/>
</dbReference>
<dbReference type="InterPro" id="IPR019978">
    <property type="entry name" value="Ribosomal_uS17_archaeal"/>
</dbReference>
<dbReference type="InterPro" id="IPR019979">
    <property type="entry name" value="Ribosomal_uS17_CS"/>
</dbReference>
<dbReference type="NCBIfam" id="NF006345">
    <property type="entry name" value="PRK08572.1"/>
    <property type="match status" value="1"/>
</dbReference>
<dbReference type="NCBIfam" id="TIGR03630">
    <property type="entry name" value="uS17_arch"/>
    <property type="match status" value="1"/>
</dbReference>
<dbReference type="PANTHER" id="PTHR10744">
    <property type="entry name" value="40S RIBOSOMAL PROTEIN S11 FAMILY MEMBER"/>
    <property type="match status" value="1"/>
</dbReference>
<dbReference type="PANTHER" id="PTHR10744:SF9">
    <property type="entry name" value="40S RIBOSOMAL PROTEIN S11-RELATED"/>
    <property type="match status" value="1"/>
</dbReference>
<dbReference type="Pfam" id="PF00366">
    <property type="entry name" value="Ribosomal_S17"/>
    <property type="match status" value="1"/>
</dbReference>
<dbReference type="PRINTS" id="PR00973">
    <property type="entry name" value="RIBOSOMALS17"/>
</dbReference>
<dbReference type="SUPFAM" id="SSF50249">
    <property type="entry name" value="Nucleic acid-binding proteins"/>
    <property type="match status" value="1"/>
</dbReference>
<dbReference type="PROSITE" id="PS00056">
    <property type="entry name" value="RIBOSOMAL_S17"/>
    <property type="match status" value="1"/>
</dbReference>
<sequence length="110" mass="12022">MAIGLNVTEPEVSCADTNCPFHGSLSVRGQTLEGTVASTDMDKTVIVEREYDVRVPKYDRLMKRRSRIPAHAPPCVDLAEGDTVRIAETRPLSKTKSHVVVEQIDTGGAE</sequence>
<gene>
    <name evidence="1" type="primary">rps17</name>
    <name type="ordered locus">HQ_2833A</name>
</gene>
<organism>
    <name type="scientific">Haloquadratum walsbyi (strain DSM 16790 / HBSQ001)</name>
    <dbReference type="NCBI Taxonomy" id="362976"/>
    <lineage>
        <taxon>Archaea</taxon>
        <taxon>Methanobacteriati</taxon>
        <taxon>Methanobacteriota</taxon>
        <taxon>Stenosarchaea group</taxon>
        <taxon>Halobacteria</taxon>
        <taxon>Halobacteriales</taxon>
        <taxon>Haloferacaceae</taxon>
        <taxon>Haloquadratum</taxon>
    </lineage>
</organism>
<proteinExistence type="inferred from homology"/>
<feature type="chain" id="PRO_0000255709" description="Small ribosomal subunit protein uS17">
    <location>
        <begin position="1"/>
        <end position="110"/>
    </location>
</feature>
<evidence type="ECO:0000255" key="1">
    <source>
        <dbReference type="HAMAP-Rule" id="MF_01345"/>
    </source>
</evidence>
<evidence type="ECO:0000305" key="2"/>
<comment type="function">
    <text evidence="1">One of the primary rRNA binding proteins, it binds specifically to the 5'-end of 16S ribosomal RNA.</text>
</comment>
<comment type="subunit">
    <text evidence="1">Part of the 30S ribosomal subunit.</text>
</comment>
<comment type="similarity">
    <text evidence="1">Belongs to the universal ribosomal protein uS17 family.</text>
</comment>
<reference key="1">
    <citation type="journal article" date="2006" name="BMC Genomics">
        <title>The genome of the square archaeon Haloquadratum walsbyi: life at the limits of water activity.</title>
        <authorList>
            <person name="Bolhuis H."/>
            <person name="Palm P."/>
            <person name="Wende A."/>
            <person name="Falb M."/>
            <person name="Rampp M."/>
            <person name="Rodriguez-Valera F."/>
            <person name="Pfeiffer F."/>
            <person name="Oesterhelt D."/>
        </authorList>
    </citation>
    <scope>NUCLEOTIDE SEQUENCE [LARGE SCALE GENOMIC DNA]</scope>
    <source>
        <strain>DSM 16790 / HBSQ001</strain>
    </source>
</reference>
<name>RS17_HALWD</name>
<keyword id="KW-1185">Reference proteome</keyword>
<keyword id="KW-0687">Ribonucleoprotein</keyword>
<keyword id="KW-0689">Ribosomal protein</keyword>
<keyword id="KW-0694">RNA-binding</keyword>
<keyword id="KW-0699">rRNA-binding</keyword>